<comment type="function">
    <text evidence="1">Negatively regulates B-cell proliferation following stimulation through the B-cell receptor. May play an important role in maintenance of marginal zone (MZ) B-cells (By similarity).</text>
</comment>
<comment type="subunit">
    <text evidence="4">Interacts with GRB2.</text>
</comment>
<comment type="subcellular location">
    <subcellularLocation>
        <location evidence="4">Cell membrane</location>
        <topology evidence="4">Single-pass membrane protein</topology>
    </subcellularLocation>
</comment>
<comment type="tissue specificity">
    <text evidence="4">Highly expressed in spleen and PBL, detected at lower levels in thymus, and undetectable in all other tissues tested. Also expressed in various B-cell lines, monocytic cell line THP-1 and NK-like cell line YT, but not in T-cell line Jurkat or HeLa cells.</text>
</comment>
<comment type="similarity">
    <text evidence="5">Belongs to the GAPT family.</text>
</comment>
<gene>
    <name type="primary">GAPT</name>
    <name type="synonym">C5orf29</name>
</gene>
<name>GAPT_HUMAN</name>
<evidence type="ECO:0000250" key="1"/>
<evidence type="ECO:0000255" key="2"/>
<evidence type="ECO:0000256" key="3">
    <source>
        <dbReference type="SAM" id="MobiDB-lite"/>
    </source>
</evidence>
<evidence type="ECO:0000269" key="4">
    <source>
    </source>
</evidence>
<evidence type="ECO:0000305" key="5"/>
<reference key="1">
    <citation type="journal article" date="2008" name="J. Leukoc. Biol.">
        <title>Identification of a new transmembrane adaptor protein that constitutively binds Grb2 in B cells.</title>
        <authorList>
            <person name="Liu Y."/>
            <person name="Zhang W."/>
        </authorList>
    </citation>
    <scope>NUCLEOTIDE SEQUENCE [MRNA]</scope>
    <scope>INTERACTION WITH GRB2</scope>
    <scope>SUBCELLULAR LOCATION</scope>
    <scope>TISSUE SPECIFICITY</scope>
    <scope>MUTAGENESIS OF PRO-139; PRO-141 AND PRO-145</scope>
    <source>
        <tissue>B-cell lymphoma</tissue>
    </source>
</reference>
<reference key="2">
    <citation type="journal article" date="2004" name="Nat. Genet.">
        <title>Complete sequencing and characterization of 21,243 full-length human cDNAs.</title>
        <authorList>
            <person name="Ota T."/>
            <person name="Suzuki Y."/>
            <person name="Nishikawa T."/>
            <person name="Otsuki T."/>
            <person name="Sugiyama T."/>
            <person name="Irie R."/>
            <person name="Wakamatsu A."/>
            <person name="Hayashi K."/>
            <person name="Sato H."/>
            <person name="Nagai K."/>
            <person name="Kimura K."/>
            <person name="Makita H."/>
            <person name="Sekine M."/>
            <person name="Obayashi M."/>
            <person name="Nishi T."/>
            <person name="Shibahara T."/>
            <person name="Tanaka T."/>
            <person name="Ishii S."/>
            <person name="Yamamoto J."/>
            <person name="Saito K."/>
            <person name="Kawai Y."/>
            <person name="Isono Y."/>
            <person name="Nakamura Y."/>
            <person name="Nagahari K."/>
            <person name="Murakami K."/>
            <person name="Yasuda T."/>
            <person name="Iwayanagi T."/>
            <person name="Wagatsuma M."/>
            <person name="Shiratori A."/>
            <person name="Sudo H."/>
            <person name="Hosoiri T."/>
            <person name="Kaku Y."/>
            <person name="Kodaira H."/>
            <person name="Kondo H."/>
            <person name="Sugawara M."/>
            <person name="Takahashi M."/>
            <person name="Kanda K."/>
            <person name="Yokoi T."/>
            <person name="Furuya T."/>
            <person name="Kikkawa E."/>
            <person name="Omura Y."/>
            <person name="Abe K."/>
            <person name="Kamihara K."/>
            <person name="Katsuta N."/>
            <person name="Sato K."/>
            <person name="Tanikawa M."/>
            <person name="Yamazaki M."/>
            <person name="Ninomiya K."/>
            <person name="Ishibashi T."/>
            <person name="Yamashita H."/>
            <person name="Murakawa K."/>
            <person name="Fujimori K."/>
            <person name="Tanai H."/>
            <person name="Kimata M."/>
            <person name="Watanabe M."/>
            <person name="Hiraoka S."/>
            <person name="Chiba Y."/>
            <person name="Ishida S."/>
            <person name="Ono Y."/>
            <person name="Takiguchi S."/>
            <person name="Watanabe S."/>
            <person name="Yosida M."/>
            <person name="Hotuta T."/>
            <person name="Kusano J."/>
            <person name="Kanehori K."/>
            <person name="Takahashi-Fujii A."/>
            <person name="Hara H."/>
            <person name="Tanase T.-O."/>
            <person name="Nomura Y."/>
            <person name="Togiya S."/>
            <person name="Komai F."/>
            <person name="Hara R."/>
            <person name="Takeuchi K."/>
            <person name="Arita M."/>
            <person name="Imose N."/>
            <person name="Musashino K."/>
            <person name="Yuuki H."/>
            <person name="Oshima A."/>
            <person name="Sasaki N."/>
            <person name="Aotsuka S."/>
            <person name="Yoshikawa Y."/>
            <person name="Matsunawa H."/>
            <person name="Ichihara T."/>
            <person name="Shiohata N."/>
            <person name="Sano S."/>
            <person name="Moriya S."/>
            <person name="Momiyama H."/>
            <person name="Satoh N."/>
            <person name="Takami S."/>
            <person name="Terashima Y."/>
            <person name="Suzuki O."/>
            <person name="Nakagawa S."/>
            <person name="Senoh A."/>
            <person name="Mizoguchi H."/>
            <person name="Goto Y."/>
            <person name="Shimizu F."/>
            <person name="Wakebe H."/>
            <person name="Hishigaki H."/>
            <person name="Watanabe T."/>
            <person name="Sugiyama A."/>
            <person name="Takemoto M."/>
            <person name="Kawakami B."/>
            <person name="Yamazaki M."/>
            <person name="Watanabe K."/>
            <person name="Kumagai A."/>
            <person name="Itakura S."/>
            <person name="Fukuzumi Y."/>
            <person name="Fujimori Y."/>
            <person name="Komiyama M."/>
            <person name="Tashiro H."/>
            <person name="Tanigami A."/>
            <person name="Fujiwara T."/>
            <person name="Ono T."/>
            <person name="Yamada K."/>
            <person name="Fujii Y."/>
            <person name="Ozaki K."/>
            <person name="Hirao M."/>
            <person name="Ohmori Y."/>
            <person name="Kawabata A."/>
            <person name="Hikiji T."/>
            <person name="Kobatake N."/>
            <person name="Inagaki H."/>
            <person name="Ikema Y."/>
            <person name="Okamoto S."/>
            <person name="Okitani R."/>
            <person name="Kawakami T."/>
            <person name="Noguchi S."/>
            <person name="Itoh T."/>
            <person name="Shigeta K."/>
            <person name="Senba T."/>
            <person name="Matsumura K."/>
            <person name="Nakajima Y."/>
            <person name="Mizuno T."/>
            <person name="Morinaga M."/>
            <person name="Sasaki M."/>
            <person name="Togashi T."/>
            <person name="Oyama M."/>
            <person name="Hata H."/>
            <person name="Watanabe M."/>
            <person name="Komatsu T."/>
            <person name="Mizushima-Sugano J."/>
            <person name="Satoh T."/>
            <person name="Shirai Y."/>
            <person name="Takahashi Y."/>
            <person name="Nakagawa K."/>
            <person name="Okumura K."/>
            <person name="Nagase T."/>
            <person name="Nomura N."/>
            <person name="Kikuchi H."/>
            <person name="Masuho Y."/>
            <person name="Yamashita R."/>
            <person name="Nakai K."/>
            <person name="Yada T."/>
            <person name="Nakamura Y."/>
            <person name="Ohara O."/>
            <person name="Isogai T."/>
            <person name="Sugano S."/>
        </authorList>
    </citation>
    <scope>NUCLEOTIDE SEQUENCE [LARGE SCALE MRNA]</scope>
    <source>
        <tissue>Amygdala</tissue>
    </source>
</reference>
<reference key="3">
    <citation type="journal article" date="2004" name="Genome Res.">
        <title>The status, quality, and expansion of the NIH full-length cDNA project: the Mammalian Gene Collection (MGC).</title>
        <authorList>
            <consortium name="The MGC Project Team"/>
        </authorList>
    </citation>
    <scope>NUCLEOTIDE SEQUENCE [LARGE SCALE MRNA]</scope>
    <source>
        <tissue>Prostate</tissue>
    </source>
</reference>
<organism>
    <name type="scientific">Homo sapiens</name>
    <name type="common">Human</name>
    <dbReference type="NCBI Taxonomy" id="9606"/>
    <lineage>
        <taxon>Eukaryota</taxon>
        <taxon>Metazoa</taxon>
        <taxon>Chordata</taxon>
        <taxon>Craniata</taxon>
        <taxon>Vertebrata</taxon>
        <taxon>Euteleostomi</taxon>
        <taxon>Mammalia</taxon>
        <taxon>Eutheria</taxon>
        <taxon>Euarchontoglires</taxon>
        <taxon>Primates</taxon>
        <taxon>Haplorrhini</taxon>
        <taxon>Catarrhini</taxon>
        <taxon>Hominidae</taxon>
        <taxon>Homo</taxon>
    </lineage>
</organism>
<accession>Q8N292</accession>
<keyword id="KW-0075">B-cell activation</keyword>
<keyword id="KW-1003">Cell membrane</keyword>
<keyword id="KW-0472">Membrane</keyword>
<keyword id="KW-1267">Proteomics identification</keyword>
<keyword id="KW-1185">Reference proteome</keyword>
<keyword id="KW-0812">Transmembrane</keyword>
<keyword id="KW-1133">Transmembrane helix</keyword>
<dbReference type="EMBL" id="AK090960">
    <property type="protein sequence ID" value="BAC03557.1"/>
    <property type="molecule type" value="mRNA"/>
</dbReference>
<dbReference type="EMBL" id="BC063534">
    <property type="protein sequence ID" value="AAH63534.1"/>
    <property type="molecule type" value="mRNA"/>
</dbReference>
<dbReference type="CCDS" id="CCDS3975.1"/>
<dbReference type="RefSeq" id="NP_001291357.1">
    <property type="nucleotide sequence ID" value="NM_001304428.2"/>
</dbReference>
<dbReference type="RefSeq" id="NP_001291358.1">
    <property type="nucleotide sequence ID" value="NM_001304429.2"/>
</dbReference>
<dbReference type="RefSeq" id="NP_001291360.1">
    <property type="nucleotide sequence ID" value="NM_001304431.2"/>
</dbReference>
<dbReference type="RefSeq" id="NP_689900.1">
    <property type="nucleotide sequence ID" value="NM_152687.4"/>
</dbReference>
<dbReference type="RefSeq" id="XP_047272865.1">
    <property type="nucleotide sequence ID" value="XM_047416909.1"/>
</dbReference>
<dbReference type="RefSeq" id="XP_047272866.1">
    <property type="nucleotide sequence ID" value="XM_047416910.1"/>
</dbReference>
<dbReference type="RefSeq" id="XP_054207982.1">
    <property type="nucleotide sequence ID" value="XM_054352007.1"/>
</dbReference>
<dbReference type="RefSeq" id="XP_054207983.1">
    <property type="nucleotide sequence ID" value="XM_054352008.1"/>
</dbReference>
<dbReference type="SMR" id="Q8N292"/>
<dbReference type="FunCoup" id="Q8N292">
    <property type="interactions" value="66"/>
</dbReference>
<dbReference type="STRING" id="9606.ENSP00000379997"/>
<dbReference type="GlyGen" id="Q8N292">
    <property type="glycosylation" value="1 site, 1 O-linked glycan (1 site)"/>
</dbReference>
<dbReference type="iPTMnet" id="Q8N292"/>
<dbReference type="PhosphoSitePlus" id="Q8N292"/>
<dbReference type="BioMuta" id="GAPT"/>
<dbReference type="DMDM" id="74728686"/>
<dbReference type="MassIVE" id="Q8N292"/>
<dbReference type="PaxDb" id="9606-ENSP00000379997"/>
<dbReference type="PeptideAtlas" id="Q8N292"/>
<dbReference type="ProteomicsDB" id="71669"/>
<dbReference type="Antibodypedia" id="2638">
    <property type="antibodies" value="85 antibodies from 14 providers"/>
</dbReference>
<dbReference type="DNASU" id="202309"/>
<dbReference type="Ensembl" id="ENST00000318469.2">
    <property type="protein sequence ID" value="ENSP00000323075.2"/>
    <property type="gene ID" value="ENSG00000175857.9"/>
</dbReference>
<dbReference type="Ensembl" id="ENST00000396776.6">
    <property type="protein sequence ID" value="ENSP00000379997.2"/>
    <property type="gene ID" value="ENSG00000175857.9"/>
</dbReference>
<dbReference type="Ensembl" id="ENST00000502276.6">
    <property type="protein sequence ID" value="ENSP00000423113.2"/>
    <property type="gene ID" value="ENSG00000175857.9"/>
</dbReference>
<dbReference type="Ensembl" id="ENST00000511930.2">
    <property type="protein sequence ID" value="ENSP00000422645.2"/>
    <property type="gene ID" value="ENSG00000175857.9"/>
</dbReference>
<dbReference type="Ensembl" id="ENST00000513924.2">
    <property type="protein sequence ID" value="ENSP00000508387.1"/>
    <property type="gene ID" value="ENSG00000175857.9"/>
</dbReference>
<dbReference type="Ensembl" id="ENST00000515443.2">
    <property type="protein sequence ID" value="ENSP00000507091.1"/>
    <property type="gene ID" value="ENSG00000175857.9"/>
</dbReference>
<dbReference type="GeneID" id="202309"/>
<dbReference type="KEGG" id="hsa:202309"/>
<dbReference type="MANE-Select" id="ENST00000502276.6">
    <property type="protein sequence ID" value="ENSP00000423113.2"/>
    <property type="RefSeq nucleotide sequence ID" value="NM_001304431.2"/>
    <property type="RefSeq protein sequence ID" value="NP_001291360.1"/>
</dbReference>
<dbReference type="UCSC" id="uc003jro.2">
    <property type="organism name" value="human"/>
</dbReference>
<dbReference type="AGR" id="HGNC:26588"/>
<dbReference type="CTD" id="202309"/>
<dbReference type="DisGeNET" id="202309"/>
<dbReference type="GeneCards" id="GAPT"/>
<dbReference type="HGNC" id="HGNC:26588">
    <property type="gene designation" value="GAPT"/>
</dbReference>
<dbReference type="HPA" id="ENSG00000175857">
    <property type="expression patterns" value="Tissue enhanced (bone marrow, lymphoid tissue)"/>
</dbReference>
<dbReference type="MIM" id="620440">
    <property type="type" value="gene"/>
</dbReference>
<dbReference type="neXtProt" id="NX_Q8N292"/>
<dbReference type="OpenTargets" id="ENSG00000175857"/>
<dbReference type="PharmGKB" id="PA164720193"/>
<dbReference type="VEuPathDB" id="HostDB:ENSG00000175857"/>
<dbReference type="eggNOG" id="ENOG502TKNI">
    <property type="taxonomic scope" value="Eukaryota"/>
</dbReference>
<dbReference type="GeneTree" id="ENSGT00390000011255"/>
<dbReference type="HOGENOM" id="CLU_1668861_0_0_1"/>
<dbReference type="InParanoid" id="Q8N292"/>
<dbReference type="OMA" id="WHWKHRN"/>
<dbReference type="OrthoDB" id="9832665at2759"/>
<dbReference type="PAN-GO" id="Q8N292">
    <property type="GO annotations" value="3 GO annotations based on evolutionary models"/>
</dbReference>
<dbReference type="PhylomeDB" id="Q8N292"/>
<dbReference type="TreeFam" id="TF338585"/>
<dbReference type="PathwayCommons" id="Q8N292"/>
<dbReference type="SignaLink" id="Q8N292"/>
<dbReference type="BioGRID-ORCS" id="202309">
    <property type="hits" value="14 hits in 1134 CRISPR screens"/>
</dbReference>
<dbReference type="ChiTaRS" id="GAPT">
    <property type="organism name" value="human"/>
</dbReference>
<dbReference type="GenomeRNAi" id="202309"/>
<dbReference type="Pharos" id="Q8N292">
    <property type="development level" value="Tbio"/>
</dbReference>
<dbReference type="PRO" id="PR:Q8N292"/>
<dbReference type="Proteomes" id="UP000005640">
    <property type="component" value="Chromosome 5"/>
</dbReference>
<dbReference type="RNAct" id="Q8N292">
    <property type="molecule type" value="protein"/>
</dbReference>
<dbReference type="Bgee" id="ENSG00000175857">
    <property type="expression patterns" value="Expressed in monocyte and 102 other cell types or tissues"/>
</dbReference>
<dbReference type="ExpressionAtlas" id="Q8N292">
    <property type="expression patterns" value="baseline and differential"/>
</dbReference>
<dbReference type="GO" id="GO:0005794">
    <property type="term" value="C:Golgi apparatus"/>
    <property type="evidence" value="ECO:0000314"/>
    <property type="project" value="HPA"/>
</dbReference>
<dbReference type="GO" id="GO:0043231">
    <property type="term" value="C:intracellular membrane-bounded organelle"/>
    <property type="evidence" value="ECO:0000314"/>
    <property type="project" value="HPA"/>
</dbReference>
<dbReference type="GO" id="GO:0005886">
    <property type="term" value="C:plasma membrane"/>
    <property type="evidence" value="ECO:0000314"/>
    <property type="project" value="HPA"/>
</dbReference>
<dbReference type="GO" id="GO:0001782">
    <property type="term" value="P:B cell homeostasis"/>
    <property type="evidence" value="ECO:0000318"/>
    <property type="project" value="GO_Central"/>
</dbReference>
<dbReference type="GO" id="GO:0002322">
    <property type="term" value="P:B cell proliferation involved in immune response"/>
    <property type="evidence" value="ECO:0000318"/>
    <property type="project" value="GO_Central"/>
</dbReference>
<dbReference type="InterPro" id="IPR021082">
    <property type="entry name" value="Protein_GAPT"/>
</dbReference>
<dbReference type="PANTHER" id="PTHR37350">
    <property type="entry name" value="PROTEIN GAPT"/>
    <property type="match status" value="1"/>
</dbReference>
<dbReference type="PANTHER" id="PTHR37350:SF1">
    <property type="entry name" value="PROTEIN GAPT"/>
    <property type="match status" value="1"/>
</dbReference>
<dbReference type="Pfam" id="PF11770">
    <property type="entry name" value="GAPT"/>
    <property type="match status" value="1"/>
</dbReference>
<dbReference type="PRINTS" id="PR02077">
    <property type="entry name" value="PROTEINGAPT"/>
</dbReference>
<feature type="chain" id="PRO_0000271123" description="Protein GAPT">
    <location>
        <begin position="1"/>
        <end position="157"/>
    </location>
</feature>
<feature type="transmembrane region" description="Helical" evidence="2">
    <location>
        <begin position="11"/>
        <end position="31"/>
    </location>
</feature>
<feature type="region of interest" description="Disordered" evidence="3">
    <location>
        <begin position="78"/>
        <end position="108"/>
    </location>
</feature>
<feature type="sequence variant" id="VAR_033673" description="In dbSNP:rs35260984.">
    <original>A</original>
    <variation>T</variation>
    <location>
        <position position="83"/>
    </location>
</feature>
<feature type="mutagenesis site" description="Abolishes interaction with GRB2." evidence="4">
    <original>P</original>
    <variation>A</variation>
    <location>
        <position position="139"/>
    </location>
</feature>
<feature type="mutagenesis site" description="Abolishes interaction with GRB2." evidence="4">
    <original>P</original>
    <variation>A</variation>
    <location>
        <position position="141"/>
    </location>
</feature>
<feature type="mutagenesis site" description="Abolishes interaction with GRB2." evidence="4">
    <original>P</original>
    <variation>A</variation>
    <location>
        <position position="145"/>
    </location>
</feature>
<sequence>MSKSCGNNLAAISVGISLLLLLVVCGIGCVWHWKHRVATRFTLPRFLQRRSSRRKVCTKTFLGPRIIGLRHEISVETQDHKSAVRGNNTHDNYENVEAGPPKAKGKTDKELYENTGQSNFEEHIYGNETSSDYYNFQKPRPSEVPQDEDIYILPDSY</sequence>
<proteinExistence type="evidence at protein level"/>
<protein>
    <recommendedName>
        <fullName>Protein GAPT</fullName>
    </recommendedName>
    <alternativeName>
        <fullName>GRB2-binding adapter protein, transmembrane</fullName>
    </alternativeName>
    <alternativeName>
        <fullName>Growth factor receptor-bound protein 2-binding adapter protein, transmembrane</fullName>
    </alternativeName>
</protein>